<feature type="chain" id="PRO_0000196468" description="DNA replication and repair protein RecF">
    <location>
        <begin position="1"/>
        <end position="369"/>
    </location>
</feature>
<feature type="binding site" evidence="1">
    <location>
        <begin position="30"/>
        <end position="37"/>
    </location>
    <ligand>
        <name>ATP</name>
        <dbReference type="ChEBI" id="CHEBI:30616"/>
    </ligand>
</feature>
<proteinExistence type="inferred from homology"/>
<reference key="1">
    <citation type="journal article" date="2002" name="Proc. Natl. Acad. Sci. U.S.A.">
        <title>Complete genome sequence and comparative genomic analysis of an emerging human pathogen, serotype V Streptococcus agalactiae.</title>
        <authorList>
            <person name="Tettelin H."/>
            <person name="Masignani V."/>
            <person name="Cieslewicz M.J."/>
            <person name="Eisen J.A."/>
            <person name="Peterson S.N."/>
            <person name="Wessels M.R."/>
            <person name="Paulsen I.T."/>
            <person name="Nelson K.E."/>
            <person name="Margarit I."/>
            <person name="Read T.D."/>
            <person name="Madoff L.C."/>
            <person name="Wolf A.M."/>
            <person name="Beanan M.J."/>
            <person name="Brinkac L.M."/>
            <person name="Daugherty S.C."/>
            <person name="DeBoy R.T."/>
            <person name="Durkin A.S."/>
            <person name="Kolonay J.F."/>
            <person name="Madupu R."/>
            <person name="Lewis M.R."/>
            <person name="Radune D."/>
            <person name="Fedorova N.B."/>
            <person name="Scanlan D."/>
            <person name="Khouri H.M."/>
            <person name="Mulligan S."/>
            <person name="Carty H.A."/>
            <person name="Cline R.T."/>
            <person name="Van Aken S.E."/>
            <person name="Gill J."/>
            <person name="Scarselli M."/>
            <person name="Mora M."/>
            <person name="Iacobini E.T."/>
            <person name="Brettoni C."/>
            <person name="Galli G."/>
            <person name="Mariani M."/>
            <person name="Vegni F."/>
            <person name="Maione D."/>
            <person name="Rinaudo D."/>
            <person name="Rappuoli R."/>
            <person name="Telford J.L."/>
            <person name="Kasper D.L."/>
            <person name="Grandi G."/>
            <person name="Fraser C.M."/>
        </authorList>
    </citation>
    <scope>NUCLEOTIDE SEQUENCE [LARGE SCALE GENOMIC DNA]</scope>
    <source>
        <strain>ATCC BAA-611 / 2603 V/R</strain>
    </source>
</reference>
<name>RECF_STRA5</name>
<gene>
    <name evidence="1" type="primary">recF</name>
    <name type="ordered locus">SAG2156</name>
</gene>
<comment type="function">
    <text evidence="1">The RecF protein is involved in DNA metabolism; it is required for DNA replication and normal SOS inducibility. RecF binds preferentially to single-stranded, linear DNA. It also seems to bind ATP.</text>
</comment>
<comment type="subcellular location">
    <subcellularLocation>
        <location evidence="1">Cytoplasm</location>
    </subcellularLocation>
</comment>
<comment type="similarity">
    <text evidence="1">Belongs to the RecF family.</text>
</comment>
<dbReference type="EMBL" id="AE009948">
    <property type="protein sequence ID" value="AAN01014.1"/>
    <property type="molecule type" value="Genomic_DNA"/>
</dbReference>
<dbReference type="RefSeq" id="NP_689141.1">
    <property type="nucleotide sequence ID" value="NC_004116.1"/>
</dbReference>
<dbReference type="RefSeq" id="WP_000264863.1">
    <property type="nucleotide sequence ID" value="NC_004116.1"/>
</dbReference>
<dbReference type="SMR" id="Q8DWQ8"/>
<dbReference type="STRING" id="208435.SAG2156"/>
<dbReference type="DNASU" id="1014967"/>
<dbReference type="KEGG" id="sag:SAG2156"/>
<dbReference type="PATRIC" id="fig|208435.3.peg.2159"/>
<dbReference type="HOGENOM" id="CLU_040267_0_1_9"/>
<dbReference type="OrthoDB" id="9803889at2"/>
<dbReference type="Proteomes" id="UP000000821">
    <property type="component" value="Chromosome"/>
</dbReference>
<dbReference type="GO" id="GO:0005737">
    <property type="term" value="C:cytoplasm"/>
    <property type="evidence" value="ECO:0007669"/>
    <property type="project" value="UniProtKB-SubCell"/>
</dbReference>
<dbReference type="GO" id="GO:0005524">
    <property type="term" value="F:ATP binding"/>
    <property type="evidence" value="ECO:0007669"/>
    <property type="project" value="UniProtKB-UniRule"/>
</dbReference>
<dbReference type="GO" id="GO:0003697">
    <property type="term" value="F:single-stranded DNA binding"/>
    <property type="evidence" value="ECO:0007669"/>
    <property type="project" value="UniProtKB-UniRule"/>
</dbReference>
<dbReference type="GO" id="GO:0006260">
    <property type="term" value="P:DNA replication"/>
    <property type="evidence" value="ECO:0007669"/>
    <property type="project" value="UniProtKB-UniRule"/>
</dbReference>
<dbReference type="GO" id="GO:0000731">
    <property type="term" value="P:DNA synthesis involved in DNA repair"/>
    <property type="evidence" value="ECO:0007669"/>
    <property type="project" value="TreeGrafter"/>
</dbReference>
<dbReference type="GO" id="GO:0006302">
    <property type="term" value="P:double-strand break repair"/>
    <property type="evidence" value="ECO:0007669"/>
    <property type="project" value="TreeGrafter"/>
</dbReference>
<dbReference type="GO" id="GO:0009432">
    <property type="term" value="P:SOS response"/>
    <property type="evidence" value="ECO:0007669"/>
    <property type="project" value="UniProtKB-UniRule"/>
</dbReference>
<dbReference type="CDD" id="cd03242">
    <property type="entry name" value="ABC_RecF"/>
    <property type="match status" value="1"/>
</dbReference>
<dbReference type="Gene3D" id="3.40.50.300">
    <property type="entry name" value="P-loop containing nucleotide triphosphate hydrolases"/>
    <property type="match status" value="1"/>
</dbReference>
<dbReference type="Gene3D" id="1.20.1050.90">
    <property type="entry name" value="RecF/RecN/SMC, N-terminal domain"/>
    <property type="match status" value="1"/>
</dbReference>
<dbReference type="HAMAP" id="MF_00365">
    <property type="entry name" value="RecF"/>
    <property type="match status" value="1"/>
</dbReference>
<dbReference type="InterPro" id="IPR001238">
    <property type="entry name" value="DNA-binding_RecF"/>
</dbReference>
<dbReference type="InterPro" id="IPR018078">
    <property type="entry name" value="DNA-binding_RecF_CS"/>
</dbReference>
<dbReference type="InterPro" id="IPR027417">
    <property type="entry name" value="P-loop_NTPase"/>
</dbReference>
<dbReference type="InterPro" id="IPR003395">
    <property type="entry name" value="RecF/RecN/SMC_N"/>
</dbReference>
<dbReference type="InterPro" id="IPR042174">
    <property type="entry name" value="RecF_2"/>
</dbReference>
<dbReference type="NCBIfam" id="TIGR00611">
    <property type="entry name" value="recf"/>
    <property type="match status" value="1"/>
</dbReference>
<dbReference type="PANTHER" id="PTHR32182">
    <property type="entry name" value="DNA REPLICATION AND REPAIR PROTEIN RECF"/>
    <property type="match status" value="1"/>
</dbReference>
<dbReference type="PANTHER" id="PTHR32182:SF0">
    <property type="entry name" value="DNA REPLICATION AND REPAIR PROTEIN RECF"/>
    <property type="match status" value="1"/>
</dbReference>
<dbReference type="Pfam" id="PF02463">
    <property type="entry name" value="SMC_N"/>
    <property type="match status" value="1"/>
</dbReference>
<dbReference type="SUPFAM" id="SSF52540">
    <property type="entry name" value="P-loop containing nucleoside triphosphate hydrolases"/>
    <property type="match status" value="1"/>
</dbReference>
<dbReference type="PROSITE" id="PS00617">
    <property type="entry name" value="RECF_1"/>
    <property type="match status" value="1"/>
</dbReference>
<dbReference type="PROSITE" id="PS00618">
    <property type="entry name" value="RECF_2"/>
    <property type="match status" value="1"/>
</dbReference>
<organism>
    <name type="scientific">Streptococcus agalactiae serotype V (strain ATCC BAA-611 / 2603 V/R)</name>
    <dbReference type="NCBI Taxonomy" id="208435"/>
    <lineage>
        <taxon>Bacteria</taxon>
        <taxon>Bacillati</taxon>
        <taxon>Bacillota</taxon>
        <taxon>Bacilli</taxon>
        <taxon>Lactobacillales</taxon>
        <taxon>Streptococcaceae</taxon>
        <taxon>Streptococcus</taxon>
    </lineage>
</organism>
<sequence>MWIKNISLKHYRNYEEAQVDFSPNLNIFIGRNAQGKTNFLEAIYFLALTRSHRTRSDKELVHFKHHDVQITGEVIRKSGHLNLDIQLSEKGRITKVNHLKQAKLSDYIGAMTVVLFAPEDLQLVKGAPSLRRKFLDIDIGQIKPTYLAELSNYNHVLKQRNTYLKTTNNVDKTFLTVLDEQLADYGSRVIEHRFDFIQALNDEADKHHYIISTELEHLSIHYKSSIEFTDKSSIREHFLNQLSKSHSRDIFKKNTSIGPHRDDITFFINDINATFASQGQQRSLILSLKLAEIELIKTVTNDYPILLLDDVMSELDNHRQLKLLEGIKENVQTFITTTSLEHLSALPDQLKIFNVSDGTISINEKKATD</sequence>
<keyword id="KW-0067">ATP-binding</keyword>
<keyword id="KW-0963">Cytoplasm</keyword>
<keyword id="KW-0227">DNA damage</keyword>
<keyword id="KW-0234">DNA repair</keyword>
<keyword id="KW-0235">DNA replication</keyword>
<keyword id="KW-0238">DNA-binding</keyword>
<keyword id="KW-0547">Nucleotide-binding</keyword>
<keyword id="KW-1185">Reference proteome</keyword>
<keyword id="KW-0742">SOS response</keyword>
<protein>
    <recommendedName>
        <fullName evidence="1">DNA replication and repair protein RecF</fullName>
    </recommendedName>
</protein>
<accession>Q8DWQ8</accession>
<evidence type="ECO:0000255" key="1">
    <source>
        <dbReference type="HAMAP-Rule" id="MF_00365"/>
    </source>
</evidence>